<evidence type="ECO:0000255" key="1">
    <source>
        <dbReference type="HAMAP-Rule" id="MF_01310"/>
    </source>
</evidence>
<evidence type="ECO:0000305" key="2"/>
<accession>Q81VQ5</accession>
<accession>Q6I4Q8</accession>
<accession>Q6KYF4</accession>
<feature type="chain" id="PRO_0000123096" description="Small ribosomal subunit protein uS11">
    <location>
        <begin position="1"/>
        <end position="129"/>
    </location>
</feature>
<comment type="function">
    <text evidence="1">Located on the platform of the 30S subunit, it bridges several disparate RNA helices of the 16S rRNA. Forms part of the Shine-Dalgarno cleft in the 70S ribosome.</text>
</comment>
<comment type="subunit">
    <text evidence="1">Part of the 30S ribosomal subunit. Interacts with proteins S7 and S18. Binds to IF-3.</text>
</comment>
<comment type="similarity">
    <text evidence="1">Belongs to the universal ribosomal protein uS11 family.</text>
</comment>
<keyword id="KW-1185">Reference proteome</keyword>
<keyword id="KW-0687">Ribonucleoprotein</keyword>
<keyword id="KW-0689">Ribosomal protein</keyword>
<keyword id="KW-0694">RNA-binding</keyword>
<keyword id="KW-0699">rRNA-binding</keyword>
<name>RS11_BACAN</name>
<organism>
    <name type="scientific">Bacillus anthracis</name>
    <dbReference type="NCBI Taxonomy" id="1392"/>
    <lineage>
        <taxon>Bacteria</taxon>
        <taxon>Bacillati</taxon>
        <taxon>Bacillota</taxon>
        <taxon>Bacilli</taxon>
        <taxon>Bacillales</taxon>
        <taxon>Bacillaceae</taxon>
        <taxon>Bacillus</taxon>
        <taxon>Bacillus cereus group</taxon>
    </lineage>
</organism>
<gene>
    <name evidence="1" type="primary">rpsK</name>
    <name type="ordered locus">BA_0136</name>
    <name type="ordered locus">GBAA_0136</name>
    <name type="ordered locus">BAS0136</name>
</gene>
<dbReference type="EMBL" id="AE016879">
    <property type="protein sequence ID" value="AAP24190.1"/>
    <property type="molecule type" value="Genomic_DNA"/>
</dbReference>
<dbReference type="EMBL" id="AE017334">
    <property type="protein sequence ID" value="AAT29216.1"/>
    <property type="molecule type" value="Genomic_DNA"/>
</dbReference>
<dbReference type="EMBL" id="AE017225">
    <property type="protein sequence ID" value="AAT52473.1"/>
    <property type="molecule type" value="Genomic_DNA"/>
</dbReference>
<dbReference type="RefSeq" id="NP_842704.1">
    <property type="nucleotide sequence ID" value="NC_003997.3"/>
</dbReference>
<dbReference type="RefSeq" id="WP_000101799.1">
    <property type="nucleotide sequence ID" value="NZ_WXXJ01000051.1"/>
</dbReference>
<dbReference type="RefSeq" id="YP_026422.1">
    <property type="nucleotide sequence ID" value="NC_005945.1"/>
</dbReference>
<dbReference type="SMR" id="Q81VQ5"/>
<dbReference type="STRING" id="261594.GBAA_0136"/>
<dbReference type="DNASU" id="1087053"/>
<dbReference type="GeneID" id="93010917"/>
<dbReference type="KEGG" id="ban:BA_0136"/>
<dbReference type="KEGG" id="bar:GBAA_0136"/>
<dbReference type="KEGG" id="bat:BAS0136"/>
<dbReference type="PATRIC" id="fig|198094.11.peg.133"/>
<dbReference type="eggNOG" id="COG0100">
    <property type="taxonomic scope" value="Bacteria"/>
</dbReference>
<dbReference type="HOGENOM" id="CLU_072439_5_0_9"/>
<dbReference type="OMA" id="KWGVAHI"/>
<dbReference type="OrthoDB" id="9806415at2"/>
<dbReference type="Proteomes" id="UP000000427">
    <property type="component" value="Chromosome"/>
</dbReference>
<dbReference type="Proteomes" id="UP000000594">
    <property type="component" value="Chromosome"/>
</dbReference>
<dbReference type="GO" id="GO:1990904">
    <property type="term" value="C:ribonucleoprotein complex"/>
    <property type="evidence" value="ECO:0007669"/>
    <property type="project" value="UniProtKB-KW"/>
</dbReference>
<dbReference type="GO" id="GO:0005840">
    <property type="term" value="C:ribosome"/>
    <property type="evidence" value="ECO:0007669"/>
    <property type="project" value="UniProtKB-KW"/>
</dbReference>
<dbReference type="GO" id="GO:0019843">
    <property type="term" value="F:rRNA binding"/>
    <property type="evidence" value="ECO:0007669"/>
    <property type="project" value="UniProtKB-UniRule"/>
</dbReference>
<dbReference type="GO" id="GO:0003735">
    <property type="term" value="F:structural constituent of ribosome"/>
    <property type="evidence" value="ECO:0007669"/>
    <property type="project" value="InterPro"/>
</dbReference>
<dbReference type="GO" id="GO:0006412">
    <property type="term" value="P:translation"/>
    <property type="evidence" value="ECO:0007669"/>
    <property type="project" value="UniProtKB-UniRule"/>
</dbReference>
<dbReference type="FunFam" id="3.30.420.80:FF:000001">
    <property type="entry name" value="30S ribosomal protein S11"/>
    <property type="match status" value="1"/>
</dbReference>
<dbReference type="Gene3D" id="3.30.420.80">
    <property type="entry name" value="Ribosomal protein S11"/>
    <property type="match status" value="1"/>
</dbReference>
<dbReference type="HAMAP" id="MF_01310">
    <property type="entry name" value="Ribosomal_uS11"/>
    <property type="match status" value="1"/>
</dbReference>
<dbReference type="InterPro" id="IPR001971">
    <property type="entry name" value="Ribosomal_uS11"/>
</dbReference>
<dbReference type="InterPro" id="IPR019981">
    <property type="entry name" value="Ribosomal_uS11_bac-type"/>
</dbReference>
<dbReference type="InterPro" id="IPR018102">
    <property type="entry name" value="Ribosomal_uS11_CS"/>
</dbReference>
<dbReference type="InterPro" id="IPR036967">
    <property type="entry name" value="Ribosomal_uS11_sf"/>
</dbReference>
<dbReference type="NCBIfam" id="NF003698">
    <property type="entry name" value="PRK05309.1"/>
    <property type="match status" value="1"/>
</dbReference>
<dbReference type="NCBIfam" id="TIGR03632">
    <property type="entry name" value="uS11_bact"/>
    <property type="match status" value="1"/>
</dbReference>
<dbReference type="PANTHER" id="PTHR11759">
    <property type="entry name" value="40S RIBOSOMAL PROTEIN S14/30S RIBOSOMAL PROTEIN S11"/>
    <property type="match status" value="1"/>
</dbReference>
<dbReference type="Pfam" id="PF00411">
    <property type="entry name" value="Ribosomal_S11"/>
    <property type="match status" value="1"/>
</dbReference>
<dbReference type="PIRSF" id="PIRSF002131">
    <property type="entry name" value="Ribosomal_S11"/>
    <property type="match status" value="1"/>
</dbReference>
<dbReference type="SUPFAM" id="SSF53137">
    <property type="entry name" value="Translational machinery components"/>
    <property type="match status" value="1"/>
</dbReference>
<dbReference type="PROSITE" id="PS00054">
    <property type="entry name" value="RIBOSOMAL_S11"/>
    <property type="match status" value="1"/>
</dbReference>
<proteinExistence type="inferred from homology"/>
<sequence>MARKTNTRKKRVKKNIEAGVAHIRSTFNNTIVTLTDTHGNALSWSSAGALGFRGSRKSTPFAAQMAAETAAKAAMEHGLKTLEVTVKGPGAGREAAIRALQAAGLEVTAIRDVTPVPHNGCRPPKRRRV</sequence>
<reference key="1">
    <citation type="journal article" date="2003" name="Nature">
        <title>The genome sequence of Bacillus anthracis Ames and comparison to closely related bacteria.</title>
        <authorList>
            <person name="Read T.D."/>
            <person name="Peterson S.N."/>
            <person name="Tourasse N.J."/>
            <person name="Baillie L.W."/>
            <person name="Paulsen I.T."/>
            <person name="Nelson K.E."/>
            <person name="Tettelin H."/>
            <person name="Fouts D.E."/>
            <person name="Eisen J.A."/>
            <person name="Gill S.R."/>
            <person name="Holtzapple E.K."/>
            <person name="Okstad O.A."/>
            <person name="Helgason E."/>
            <person name="Rilstone J."/>
            <person name="Wu M."/>
            <person name="Kolonay J.F."/>
            <person name="Beanan M.J."/>
            <person name="Dodson R.J."/>
            <person name="Brinkac L.M."/>
            <person name="Gwinn M.L."/>
            <person name="DeBoy R.T."/>
            <person name="Madpu R."/>
            <person name="Daugherty S.C."/>
            <person name="Durkin A.S."/>
            <person name="Haft D.H."/>
            <person name="Nelson W.C."/>
            <person name="Peterson J.D."/>
            <person name="Pop M."/>
            <person name="Khouri H.M."/>
            <person name="Radune D."/>
            <person name="Benton J.L."/>
            <person name="Mahamoud Y."/>
            <person name="Jiang L."/>
            <person name="Hance I.R."/>
            <person name="Weidman J.F."/>
            <person name="Berry K.J."/>
            <person name="Plaut R.D."/>
            <person name="Wolf A.M."/>
            <person name="Watkins K.L."/>
            <person name="Nierman W.C."/>
            <person name="Hazen A."/>
            <person name="Cline R.T."/>
            <person name="Redmond C."/>
            <person name="Thwaite J.E."/>
            <person name="White O."/>
            <person name="Salzberg S.L."/>
            <person name="Thomason B."/>
            <person name="Friedlander A.M."/>
            <person name="Koehler T.M."/>
            <person name="Hanna P.C."/>
            <person name="Kolstoe A.-B."/>
            <person name="Fraser C.M."/>
        </authorList>
    </citation>
    <scope>NUCLEOTIDE SEQUENCE [LARGE SCALE GENOMIC DNA]</scope>
    <source>
        <strain>Ames / isolate Porton</strain>
    </source>
</reference>
<reference key="2">
    <citation type="journal article" date="2009" name="J. Bacteriol.">
        <title>The complete genome sequence of Bacillus anthracis Ames 'Ancestor'.</title>
        <authorList>
            <person name="Ravel J."/>
            <person name="Jiang L."/>
            <person name="Stanley S.T."/>
            <person name="Wilson M.R."/>
            <person name="Decker R.S."/>
            <person name="Read T.D."/>
            <person name="Worsham P."/>
            <person name="Keim P.S."/>
            <person name="Salzberg S.L."/>
            <person name="Fraser-Liggett C.M."/>
            <person name="Rasko D.A."/>
        </authorList>
    </citation>
    <scope>NUCLEOTIDE SEQUENCE [LARGE SCALE GENOMIC DNA]</scope>
    <source>
        <strain>Ames ancestor</strain>
    </source>
</reference>
<reference key="3">
    <citation type="submission" date="2004-01" db="EMBL/GenBank/DDBJ databases">
        <title>Complete genome sequence of Bacillus anthracis Sterne.</title>
        <authorList>
            <person name="Brettin T.S."/>
            <person name="Bruce D."/>
            <person name="Challacombe J.F."/>
            <person name="Gilna P."/>
            <person name="Han C."/>
            <person name="Hill K."/>
            <person name="Hitchcock P."/>
            <person name="Jackson P."/>
            <person name="Keim P."/>
            <person name="Longmire J."/>
            <person name="Lucas S."/>
            <person name="Okinaka R."/>
            <person name="Richardson P."/>
            <person name="Rubin E."/>
            <person name="Tice H."/>
        </authorList>
    </citation>
    <scope>NUCLEOTIDE SEQUENCE [LARGE SCALE GENOMIC DNA]</scope>
    <source>
        <strain>Sterne</strain>
    </source>
</reference>
<protein>
    <recommendedName>
        <fullName evidence="1">Small ribosomal subunit protein uS11</fullName>
    </recommendedName>
    <alternativeName>
        <fullName evidence="2">30S ribosomal protein S11</fullName>
    </alternativeName>
</protein>